<sequence>MFKATARYIRVQPRKARLAAGLMRNLSVTEAQQQLSFSQLKAGRCLKKVLDSAVANAELHDNVKREKLNVIEVRVDAGPVYKRAKSKSRGGRSPILKRTSHLTVIVGEKER</sequence>
<dbReference type="EMBL" id="CR848038">
    <property type="protein sequence ID" value="CAH63555.1"/>
    <property type="molecule type" value="Genomic_DNA"/>
</dbReference>
<dbReference type="RefSeq" id="WP_006343768.1">
    <property type="nucleotide sequence ID" value="NC_004552.2"/>
</dbReference>
<dbReference type="SMR" id="Q5L715"/>
<dbReference type="GeneID" id="93024644"/>
<dbReference type="KEGG" id="cab:CAB098"/>
<dbReference type="eggNOG" id="COG0091">
    <property type="taxonomic scope" value="Bacteria"/>
</dbReference>
<dbReference type="HOGENOM" id="CLU_083987_3_3_0"/>
<dbReference type="OrthoDB" id="9805969at2"/>
<dbReference type="Proteomes" id="UP000001012">
    <property type="component" value="Chromosome"/>
</dbReference>
<dbReference type="GO" id="GO:0022625">
    <property type="term" value="C:cytosolic large ribosomal subunit"/>
    <property type="evidence" value="ECO:0007669"/>
    <property type="project" value="TreeGrafter"/>
</dbReference>
<dbReference type="GO" id="GO:0019843">
    <property type="term" value="F:rRNA binding"/>
    <property type="evidence" value="ECO:0007669"/>
    <property type="project" value="UniProtKB-UniRule"/>
</dbReference>
<dbReference type="GO" id="GO:0003735">
    <property type="term" value="F:structural constituent of ribosome"/>
    <property type="evidence" value="ECO:0007669"/>
    <property type="project" value="InterPro"/>
</dbReference>
<dbReference type="GO" id="GO:0006412">
    <property type="term" value="P:translation"/>
    <property type="evidence" value="ECO:0007669"/>
    <property type="project" value="UniProtKB-UniRule"/>
</dbReference>
<dbReference type="Gene3D" id="3.90.470.10">
    <property type="entry name" value="Ribosomal protein L22/L17"/>
    <property type="match status" value="1"/>
</dbReference>
<dbReference type="HAMAP" id="MF_01331_B">
    <property type="entry name" value="Ribosomal_uL22_B"/>
    <property type="match status" value="1"/>
</dbReference>
<dbReference type="InterPro" id="IPR001063">
    <property type="entry name" value="Ribosomal_uL22"/>
</dbReference>
<dbReference type="InterPro" id="IPR005727">
    <property type="entry name" value="Ribosomal_uL22_bac/chlpt-type"/>
</dbReference>
<dbReference type="InterPro" id="IPR047867">
    <property type="entry name" value="Ribosomal_uL22_bac/org-type"/>
</dbReference>
<dbReference type="InterPro" id="IPR036394">
    <property type="entry name" value="Ribosomal_uL22_sf"/>
</dbReference>
<dbReference type="NCBIfam" id="TIGR01044">
    <property type="entry name" value="rplV_bact"/>
    <property type="match status" value="1"/>
</dbReference>
<dbReference type="PANTHER" id="PTHR13501">
    <property type="entry name" value="CHLOROPLAST 50S RIBOSOMAL PROTEIN L22-RELATED"/>
    <property type="match status" value="1"/>
</dbReference>
<dbReference type="PANTHER" id="PTHR13501:SF8">
    <property type="entry name" value="LARGE RIBOSOMAL SUBUNIT PROTEIN UL22M"/>
    <property type="match status" value="1"/>
</dbReference>
<dbReference type="Pfam" id="PF00237">
    <property type="entry name" value="Ribosomal_L22"/>
    <property type="match status" value="1"/>
</dbReference>
<dbReference type="SUPFAM" id="SSF54843">
    <property type="entry name" value="Ribosomal protein L22"/>
    <property type="match status" value="1"/>
</dbReference>
<keyword id="KW-0687">Ribonucleoprotein</keyword>
<keyword id="KW-0689">Ribosomal protein</keyword>
<keyword id="KW-0694">RNA-binding</keyword>
<keyword id="KW-0699">rRNA-binding</keyword>
<feature type="chain" id="PRO_0000243138" description="Large ribosomal subunit protein uL22">
    <location>
        <begin position="1"/>
        <end position="111"/>
    </location>
</feature>
<reference key="1">
    <citation type="journal article" date="2005" name="Genome Res.">
        <title>The Chlamydophila abortus genome sequence reveals an array of variable proteins that contribute to interspecies variation.</title>
        <authorList>
            <person name="Thomson N.R."/>
            <person name="Yeats C."/>
            <person name="Bell K."/>
            <person name="Holden M.T.G."/>
            <person name="Bentley S.D."/>
            <person name="Livingstone M."/>
            <person name="Cerdeno-Tarraga A.-M."/>
            <person name="Harris B."/>
            <person name="Doggett J."/>
            <person name="Ormond D."/>
            <person name="Mungall K."/>
            <person name="Clarke K."/>
            <person name="Feltwell T."/>
            <person name="Hance Z."/>
            <person name="Sanders M."/>
            <person name="Quail M.A."/>
            <person name="Price C."/>
            <person name="Barrell B.G."/>
            <person name="Parkhill J."/>
            <person name="Longbottom D."/>
        </authorList>
    </citation>
    <scope>NUCLEOTIDE SEQUENCE [LARGE SCALE GENOMIC DNA]</scope>
    <source>
        <strain>DSM 27085 / S26/3</strain>
    </source>
</reference>
<proteinExistence type="inferred from homology"/>
<gene>
    <name evidence="1" type="primary">rplV</name>
    <name type="ordered locus">CAB098</name>
</gene>
<accession>Q5L715</accession>
<comment type="function">
    <text evidence="1">This protein binds specifically to 23S rRNA; its binding is stimulated by other ribosomal proteins, e.g. L4, L17, and L20. It is important during the early stages of 50S assembly. It makes multiple contacts with different domains of the 23S rRNA in the assembled 50S subunit and ribosome (By similarity).</text>
</comment>
<comment type="function">
    <text evidence="1">The globular domain of the protein is located near the polypeptide exit tunnel on the outside of the subunit, while an extended beta-hairpin is found that lines the wall of the exit tunnel in the center of the 70S ribosome.</text>
</comment>
<comment type="subunit">
    <text evidence="1">Part of the 50S ribosomal subunit.</text>
</comment>
<comment type="similarity">
    <text evidence="1">Belongs to the universal ribosomal protein uL22 family.</text>
</comment>
<name>RL22_CHLAB</name>
<organism>
    <name type="scientific">Chlamydia abortus (strain DSM 27085 / S26/3)</name>
    <name type="common">Chlamydophila abortus</name>
    <dbReference type="NCBI Taxonomy" id="218497"/>
    <lineage>
        <taxon>Bacteria</taxon>
        <taxon>Pseudomonadati</taxon>
        <taxon>Chlamydiota</taxon>
        <taxon>Chlamydiia</taxon>
        <taxon>Chlamydiales</taxon>
        <taxon>Chlamydiaceae</taxon>
        <taxon>Chlamydia/Chlamydophila group</taxon>
        <taxon>Chlamydia</taxon>
    </lineage>
</organism>
<protein>
    <recommendedName>
        <fullName evidence="1">Large ribosomal subunit protein uL22</fullName>
    </recommendedName>
    <alternativeName>
        <fullName evidence="2">50S ribosomal protein L22</fullName>
    </alternativeName>
</protein>
<evidence type="ECO:0000255" key="1">
    <source>
        <dbReference type="HAMAP-Rule" id="MF_01331"/>
    </source>
</evidence>
<evidence type="ECO:0000305" key="2"/>